<protein>
    <recommendedName>
        <fullName evidence="1">ATP-dependent Clp protease proteolytic subunit</fullName>
        <ecNumber evidence="1">3.4.21.92</ecNumber>
    </recommendedName>
    <alternativeName>
        <fullName evidence="1">Endopeptidase Clp</fullName>
    </alternativeName>
</protein>
<name>CLPP_SHEON</name>
<feature type="chain" id="PRO_0000179646" description="ATP-dependent Clp protease proteolytic subunit">
    <location>
        <begin position="1"/>
        <end position="202"/>
    </location>
</feature>
<feature type="active site" description="Nucleophile" evidence="1">
    <location>
        <position position="106"/>
    </location>
</feature>
<feature type="active site" evidence="1">
    <location>
        <position position="131"/>
    </location>
</feature>
<dbReference type="EC" id="3.4.21.92" evidence="1"/>
<dbReference type="EMBL" id="AE014299">
    <property type="protein sequence ID" value="AAN54847.1"/>
    <property type="molecule type" value="Genomic_DNA"/>
</dbReference>
<dbReference type="RefSeq" id="NP_717403.1">
    <property type="nucleotide sequence ID" value="NC_004347.2"/>
</dbReference>
<dbReference type="RefSeq" id="WP_011071916.1">
    <property type="nucleotide sequence ID" value="NZ_CP053946.1"/>
</dbReference>
<dbReference type="SMR" id="Q8EG19"/>
<dbReference type="STRING" id="211586.SO_1794"/>
<dbReference type="MEROPS" id="S14.001"/>
<dbReference type="PaxDb" id="211586-SO_1794"/>
<dbReference type="KEGG" id="son:SO_1794"/>
<dbReference type="PATRIC" id="fig|211586.12.peg.1724"/>
<dbReference type="eggNOG" id="COG0740">
    <property type="taxonomic scope" value="Bacteria"/>
</dbReference>
<dbReference type="HOGENOM" id="CLU_058707_3_2_6"/>
<dbReference type="OrthoDB" id="9802800at2"/>
<dbReference type="PhylomeDB" id="Q8EG19"/>
<dbReference type="BioCyc" id="SONE211586:G1GMP-1645-MONOMER"/>
<dbReference type="Proteomes" id="UP000008186">
    <property type="component" value="Chromosome"/>
</dbReference>
<dbReference type="GO" id="GO:0005737">
    <property type="term" value="C:cytoplasm"/>
    <property type="evidence" value="ECO:0007669"/>
    <property type="project" value="UniProtKB-SubCell"/>
</dbReference>
<dbReference type="GO" id="GO:0009368">
    <property type="term" value="C:endopeptidase Clp complex"/>
    <property type="evidence" value="ECO:0000318"/>
    <property type="project" value="GO_Central"/>
</dbReference>
<dbReference type="GO" id="GO:0004176">
    <property type="term" value="F:ATP-dependent peptidase activity"/>
    <property type="evidence" value="ECO:0000318"/>
    <property type="project" value="GO_Central"/>
</dbReference>
<dbReference type="GO" id="GO:0051117">
    <property type="term" value="F:ATPase binding"/>
    <property type="evidence" value="ECO:0000318"/>
    <property type="project" value="GO_Central"/>
</dbReference>
<dbReference type="GO" id="GO:0004252">
    <property type="term" value="F:serine-type endopeptidase activity"/>
    <property type="evidence" value="ECO:0000318"/>
    <property type="project" value="GO_Central"/>
</dbReference>
<dbReference type="GO" id="GO:0006515">
    <property type="term" value="P:protein quality control for misfolded or incompletely synthesized proteins"/>
    <property type="evidence" value="ECO:0000318"/>
    <property type="project" value="GO_Central"/>
</dbReference>
<dbReference type="CDD" id="cd07017">
    <property type="entry name" value="S14_ClpP_2"/>
    <property type="match status" value="1"/>
</dbReference>
<dbReference type="FunFam" id="3.90.226.10:FF:000001">
    <property type="entry name" value="ATP-dependent Clp protease proteolytic subunit"/>
    <property type="match status" value="1"/>
</dbReference>
<dbReference type="Gene3D" id="3.90.226.10">
    <property type="entry name" value="2-enoyl-CoA Hydratase, Chain A, domain 1"/>
    <property type="match status" value="1"/>
</dbReference>
<dbReference type="HAMAP" id="MF_00444">
    <property type="entry name" value="ClpP"/>
    <property type="match status" value="1"/>
</dbReference>
<dbReference type="InterPro" id="IPR001907">
    <property type="entry name" value="ClpP"/>
</dbReference>
<dbReference type="InterPro" id="IPR029045">
    <property type="entry name" value="ClpP/crotonase-like_dom_sf"/>
</dbReference>
<dbReference type="InterPro" id="IPR023562">
    <property type="entry name" value="ClpP/TepA"/>
</dbReference>
<dbReference type="InterPro" id="IPR033135">
    <property type="entry name" value="ClpP_His_AS"/>
</dbReference>
<dbReference type="InterPro" id="IPR018215">
    <property type="entry name" value="ClpP_Ser_AS"/>
</dbReference>
<dbReference type="NCBIfam" id="TIGR00493">
    <property type="entry name" value="clpP"/>
    <property type="match status" value="1"/>
</dbReference>
<dbReference type="NCBIfam" id="NF001368">
    <property type="entry name" value="PRK00277.1"/>
    <property type="match status" value="1"/>
</dbReference>
<dbReference type="NCBIfam" id="NF009205">
    <property type="entry name" value="PRK12553.1"/>
    <property type="match status" value="1"/>
</dbReference>
<dbReference type="PANTHER" id="PTHR10381">
    <property type="entry name" value="ATP-DEPENDENT CLP PROTEASE PROTEOLYTIC SUBUNIT"/>
    <property type="match status" value="1"/>
</dbReference>
<dbReference type="PANTHER" id="PTHR10381:SF70">
    <property type="entry name" value="ATP-DEPENDENT CLP PROTEASE PROTEOLYTIC SUBUNIT"/>
    <property type="match status" value="1"/>
</dbReference>
<dbReference type="Pfam" id="PF00574">
    <property type="entry name" value="CLP_protease"/>
    <property type="match status" value="1"/>
</dbReference>
<dbReference type="PRINTS" id="PR00127">
    <property type="entry name" value="CLPPROTEASEP"/>
</dbReference>
<dbReference type="SUPFAM" id="SSF52096">
    <property type="entry name" value="ClpP/crotonase"/>
    <property type="match status" value="1"/>
</dbReference>
<dbReference type="PROSITE" id="PS00382">
    <property type="entry name" value="CLP_PROTEASE_HIS"/>
    <property type="match status" value="1"/>
</dbReference>
<dbReference type="PROSITE" id="PS00381">
    <property type="entry name" value="CLP_PROTEASE_SER"/>
    <property type="match status" value="1"/>
</dbReference>
<evidence type="ECO:0000255" key="1">
    <source>
        <dbReference type="HAMAP-Rule" id="MF_00444"/>
    </source>
</evidence>
<keyword id="KW-0963">Cytoplasm</keyword>
<keyword id="KW-0378">Hydrolase</keyword>
<keyword id="KW-0645">Protease</keyword>
<keyword id="KW-1185">Reference proteome</keyword>
<keyword id="KW-0720">Serine protease</keyword>
<sequence length="202" mass="22115">MHNASDIQSALVPMVIEQTAKGERSFDIYSRLLKERIIFLVGQVEEHMANLIVAQLLFLESESPDKDIFLYINSPGGSVTAGMAIYDTMQFIKPNVSTVCIGQAASMGAFLLAGGEKGKRFCLPNSRVMIHQPLGGFQGQASDIAIHAQEILGIKNKLNQMLADHTGQPLEVIERDTDRDNFMSATQAVEYGLVDAVMTKRG</sequence>
<organism>
    <name type="scientific">Shewanella oneidensis (strain ATCC 700550 / JCM 31522 / CIP 106686 / LMG 19005 / NCIMB 14063 / MR-1)</name>
    <dbReference type="NCBI Taxonomy" id="211586"/>
    <lineage>
        <taxon>Bacteria</taxon>
        <taxon>Pseudomonadati</taxon>
        <taxon>Pseudomonadota</taxon>
        <taxon>Gammaproteobacteria</taxon>
        <taxon>Alteromonadales</taxon>
        <taxon>Shewanellaceae</taxon>
        <taxon>Shewanella</taxon>
    </lineage>
</organism>
<gene>
    <name evidence="1" type="primary">clpP</name>
    <name type="ordered locus">SO_1794</name>
</gene>
<proteinExistence type="inferred from homology"/>
<reference key="1">
    <citation type="journal article" date="2002" name="Nat. Biotechnol.">
        <title>Genome sequence of the dissimilatory metal ion-reducing bacterium Shewanella oneidensis.</title>
        <authorList>
            <person name="Heidelberg J.F."/>
            <person name="Paulsen I.T."/>
            <person name="Nelson K.E."/>
            <person name="Gaidos E.J."/>
            <person name="Nelson W.C."/>
            <person name="Read T.D."/>
            <person name="Eisen J.A."/>
            <person name="Seshadri R."/>
            <person name="Ward N.L."/>
            <person name="Methe B.A."/>
            <person name="Clayton R.A."/>
            <person name="Meyer T."/>
            <person name="Tsapin A."/>
            <person name="Scott J."/>
            <person name="Beanan M.J."/>
            <person name="Brinkac L.M."/>
            <person name="Daugherty S.C."/>
            <person name="DeBoy R.T."/>
            <person name="Dodson R.J."/>
            <person name="Durkin A.S."/>
            <person name="Haft D.H."/>
            <person name="Kolonay J.F."/>
            <person name="Madupu R."/>
            <person name="Peterson J.D."/>
            <person name="Umayam L.A."/>
            <person name="White O."/>
            <person name="Wolf A.M."/>
            <person name="Vamathevan J.J."/>
            <person name="Weidman J.F."/>
            <person name="Impraim M."/>
            <person name="Lee K."/>
            <person name="Berry K.J."/>
            <person name="Lee C."/>
            <person name="Mueller J."/>
            <person name="Khouri H.M."/>
            <person name="Gill J."/>
            <person name="Utterback T.R."/>
            <person name="McDonald L.A."/>
            <person name="Feldblyum T.V."/>
            <person name="Smith H.O."/>
            <person name="Venter J.C."/>
            <person name="Nealson K.H."/>
            <person name="Fraser C.M."/>
        </authorList>
    </citation>
    <scope>NUCLEOTIDE SEQUENCE [LARGE SCALE GENOMIC DNA]</scope>
    <source>
        <strain>ATCC 700550 / JCM 31522 / CIP 106686 / LMG 19005 / NCIMB 14063 / MR-1</strain>
    </source>
</reference>
<accession>Q8EG19</accession>
<comment type="function">
    <text evidence="1">Cleaves peptides in various proteins in a process that requires ATP hydrolysis. Has a chymotrypsin-like activity. Plays a major role in the degradation of misfolded proteins.</text>
</comment>
<comment type="catalytic activity">
    <reaction evidence="1">
        <text>Hydrolysis of proteins to small peptides in the presence of ATP and magnesium. alpha-casein is the usual test substrate. In the absence of ATP, only oligopeptides shorter than five residues are hydrolyzed (such as succinyl-Leu-Tyr-|-NHMec, and Leu-Tyr-Leu-|-Tyr-Trp, in which cleavage of the -Tyr-|-Leu- and -Tyr-|-Trp bonds also occurs).</text>
        <dbReference type="EC" id="3.4.21.92"/>
    </reaction>
</comment>
<comment type="subunit">
    <text evidence="1">Fourteen ClpP subunits assemble into 2 heptameric rings which stack back to back to give a disk-like structure with a central cavity, resembling the structure of eukaryotic proteasomes.</text>
</comment>
<comment type="subcellular location">
    <subcellularLocation>
        <location evidence="1">Cytoplasm</location>
    </subcellularLocation>
</comment>
<comment type="similarity">
    <text evidence="1">Belongs to the peptidase S14 family.</text>
</comment>